<evidence type="ECO:0000255" key="1">
    <source>
        <dbReference type="HAMAP-Rule" id="MF_00127"/>
    </source>
</evidence>
<comment type="catalytic activity">
    <reaction evidence="1">
        <text>tRNA(His) + L-histidine + ATP = L-histidyl-tRNA(His) + AMP + diphosphate + H(+)</text>
        <dbReference type="Rhea" id="RHEA:17313"/>
        <dbReference type="Rhea" id="RHEA-COMP:9665"/>
        <dbReference type="Rhea" id="RHEA-COMP:9689"/>
        <dbReference type="ChEBI" id="CHEBI:15378"/>
        <dbReference type="ChEBI" id="CHEBI:30616"/>
        <dbReference type="ChEBI" id="CHEBI:33019"/>
        <dbReference type="ChEBI" id="CHEBI:57595"/>
        <dbReference type="ChEBI" id="CHEBI:78442"/>
        <dbReference type="ChEBI" id="CHEBI:78527"/>
        <dbReference type="ChEBI" id="CHEBI:456215"/>
        <dbReference type="EC" id="6.1.1.21"/>
    </reaction>
</comment>
<comment type="subunit">
    <text evidence="1">Homodimer.</text>
</comment>
<comment type="subcellular location">
    <subcellularLocation>
        <location evidence="1">Cytoplasm</location>
    </subcellularLocation>
</comment>
<comment type="similarity">
    <text evidence="1">Belongs to the class-II aminoacyl-tRNA synthetase family.</text>
</comment>
<name>SYH1_BACC1</name>
<accession>P62367</accession>
<sequence>MEMKNVKGTKDYLPEEQVLRNKIKRACEDTFERYGCKPLETPTLNMYELMSYKYGGGDEILKEIYTLQDQGKRNLALRYDLTIPFAKVVAMNPNIRLPFKRYEIGKVFRDGPIKQGRFREFIQCDVDIVGVESVMAEAELMSMAFELFRTLNLEVTIQYNNRKLLNGILESINIPTERTSDVILSLDKIEKIGIDGVRKDVLERGISEEMADTICNTVLSCLKLTIADFKEAFNNPLVADGVNELQQLQQYLIALGINENAIFNPFLARGLTMYTGTVYEIFLKDGSITSSIGSGGRYDNIIGAFRGDNMNYPTVGISFGLDVIYTALSQKETISSTADVFIIPLGTELQCLQIAQQLRSTTSLKVELELAGRKLKRALNYANKENIPYVLIIGEDELSTETVVLRNMKEGSEVKVPLSSLKDNTFNNYCNIPIKL</sequence>
<protein>
    <recommendedName>
        <fullName evidence="1">Histidine--tRNA ligase 1</fullName>
        <ecNumber evidence="1">6.1.1.21</ecNumber>
    </recommendedName>
    <alternativeName>
        <fullName evidence="1">Histidyl-tRNA synthetase 1</fullName>
        <shortName evidence="1">HisRS 1</shortName>
    </alternativeName>
</protein>
<keyword id="KW-0030">Aminoacyl-tRNA synthetase</keyword>
<keyword id="KW-0067">ATP-binding</keyword>
<keyword id="KW-0963">Cytoplasm</keyword>
<keyword id="KW-0436">Ligase</keyword>
<keyword id="KW-0547">Nucleotide-binding</keyword>
<keyword id="KW-0648">Protein biosynthesis</keyword>
<dbReference type="EC" id="6.1.1.21" evidence="1"/>
<dbReference type="EMBL" id="AE017194">
    <property type="protein sequence ID" value="AAS42256.1"/>
    <property type="molecule type" value="Genomic_DNA"/>
</dbReference>
<dbReference type="SMR" id="P62367"/>
<dbReference type="KEGG" id="bca:BCE_3348"/>
<dbReference type="HOGENOM" id="CLU_025113_3_0_9"/>
<dbReference type="Proteomes" id="UP000002527">
    <property type="component" value="Chromosome"/>
</dbReference>
<dbReference type="GO" id="GO:0005737">
    <property type="term" value="C:cytoplasm"/>
    <property type="evidence" value="ECO:0007669"/>
    <property type="project" value="UniProtKB-SubCell"/>
</dbReference>
<dbReference type="GO" id="GO:0005524">
    <property type="term" value="F:ATP binding"/>
    <property type="evidence" value="ECO:0007669"/>
    <property type="project" value="UniProtKB-UniRule"/>
</dbReference>
<dbReference type="GO" id="GO:0140096">
    <property type="term" value="F:catalytic activity, acting on a protein"/>
    <property type="evidence" value="ECO:0007669"/>
    <property type="project" value="UniProtKB-ARBA"/>
</dbReference>
<dbReference type="GO" id="GO:0004821">
    <property type="term" value="F:histidine-tRNA ligase activity"/>
    <property type="evidence" value="ECO:0007669"/>
    <property type="project" value="UniProtKB-UniRule"/>
</dbReference>
<dbReference type="GO" id="GO:0016740">
    <property type="term" value="F:transferase activity"/>
    <property type="evidence" value="ECO:0007669"/>
    <property type="project" value="UniProtKB-ARBA"/>
</dbReference>
<dbReference type="GO" id="GO:0006427">
    <property type="term" value="P:histidyl-tRNA aminoacylation"/>
    <property type="evidence" value="ECO:0007669"/>
    <property type="project" value="UniProtKB-UniRule"/>
</dbReference>
<dbReference type="CDD" id="cd00773">
    <property type="entry name" value="HisRS-like_core"/>
    <property type="match status" value="1"/>
</dbReference>
<dbReference type="CDD" id="cd00859">
    <property type="entry name" value="HisRS_anticodon"/>
    <property type="match status" value="1"/>
</dbReference>
<dbReference type="FunFam" id="3.30.930.10:FF:000099">
    <property type="entry name" value="Histidine--tRNA ligase"/>
    <property type="match status" value="1"/>
</dbReference>
<dbReference type="FunFam" id="3.40.50.800:FF:000033">
    <property type="entry name" value="Histidine--tRNA ligase"/>
    <property type="match status" value="1"/>
</dbReference>
<dbReference type="Gene3D" id="3.40.50.800">
    <property type="entry name" value="Anticodon-binding domain"/>
    <property type="match status" value="1"/>
</dbReference>
<dbReference type="Gene3D" id="3.30.930.10">
    <property type="entry name" value="Bira Bifunctional Protein, Domain 2"/>
    <property type="match status" value="1"/>
</dbReference>
<dbReference type="HAMAP" id="MF_00127">
    <property type="entry name" value="His_tRNA_synth"/>
    <property type="match status" value="1"/>
</dbReference>
<dbReference type="InterPro" id="IPR006195">
    <property type="entry name" value="aa-tRNA-synth_II"/>
</dbReference>
<dbReference type="InterPro" id="IPR045864">
    <property type="entry name" value="aa-tRNA-synth_II/BPL/LPL"/>
</dbReference>
<dbReference type="InterPro" id="IPR004154">
    <property type="entry name" value="Anticodon-bd"/>
</dbReference>
<dbReference type="InterPro" id="IPR036621">
    <property type="entry name" value="Anticodon-bd_dom_sf"/>
</dbReference>
<dbReference type="InterPro" id="IPR015807">
    <property type="entry name" value="His-tRNA-ligase"/>
</dbReference>
<dbReference type="InterPro" id="IPR041715">
    <property type="entry name" value="HisRS-like_core"/>
</dbReference>
<dbReference type="InterPro" id="IPR004516">
    <property type="entry name" value="HisRS/HisZ"/>
</dbReference>
<dbReference type="InterPro" id="IPR033656">
    <property type="entry name" value="HisRS_anticodon"/>
</dbReference>
<dbReference type="NCBIfam" id="TIGR00442">
    <property type="entry name" value="hisS"/>
    <property type="match status" value="1"/>
</dbReference>
<dbReference type="NCBIfam" id="NF009085">
    <property type="entry name" value="PRK12420.1"/>
    <property type="match status" value="1"/>
</dbReference>
<dbReference type="PANTHER" id="PTHR11476:SF7">
    <property type="entry name" value="HISTIDINE--TRNA LIGASE"/>
    <property type="match status" value="1"/>
</dbReference>
<dbReference type="PANTHER" id="PTHR11476">
    <property type="entry name" value="HISTIDYL-TRNA SYNTHETASE"/>
    <property type="match status" value="1"/>
</dbReference>
<dbReference type="Pfam" id="PF03129">
    <property type="entry name" value="HGTP_anticodon"/>
    <property type="match status" value="1"/>
</dbReference>
<dbReference type="Pfam" id="PF13393">
    <property type="entry name" value="tRNA-synt_His"/>
    <property type="match status" value="1"/>
</dbReference>
<dbReference type="PIRSF" id="PIRSF001549">
    <property type="entry name" value="His-tRNA_synth"/>
    <property type="match status" value="1"/>
</dbReference>
<dbReference type="SUPFAM" id="SSF52954">
    <property type="entry name" value="Class II aaRS ABD-related"/>
    <property type="match status" value="1"/>
</dbReference>
<dbReference type="SUPFAM" id="SSF55681">
    <property type="entry name" value="Class II aaRS and biotin synthetases"/>
    <property type="match status" value="1"/>
</dbReference>
<dbReference type="PROSITE" id="PS50862">
    <property type="entry name" value="AA_TRNA_LIGASE_II"/>
    <property type="match status" value="1"/>
</dbReference>
<gene>
    <name evidence="1" type="primary">hisS1</name>
    <name type="ordered locus">BCE_3348</name>
</gene>
<feature type="chain" id="PRO_0000136095" description="Histidine--tRNA ligase 1">
    <location>
        <begin position="1"/>
        <end position="436"/>
    </location>
</feature>
<proteinExistence type="inferred from homology"/>
<reference key="1">
    <citation type="journal article" date="2004" name="Nucleic Acids Res.">
        <title>The genome sequence of Bacillus cereus ATCC 10987 reveals metabolic adaptations and a large plasmid related to Bacillus anthracis pXO1.</title>
        <authorList>
            <person name="Rasko D.A."/>
            <person name="Ravel J."/>
            <person name="Oekstad O.A."/>
            <person name="Helgason E."/>
            <person name="Cer R.Z."/>
            <person name="Jiang L."/>
            <person name="Shores K.A."/>
            <person name="Fouts D.E."/>
            <person name="Tourasse N.J."/>
            <person name="Angiuoli S.V."/>
            <person name="Kolonay J.F."/>
            <person name="Nelson W.C."/>
            <person name="Kolstoe A.-B."/>
            <person name="Fraser C.M."/>
            <person name="Read T.D."/>
        </authorList>
    </citation>
    <scope>NUCLEOTIDE SEQUENCE [LARGE SCALE GENOMIC DNA]</scope>
    <source>
        <strain>ATCC 10987 / NRS 248</strain>
    </source>
</reference>
<organism>
    <name type="scientific">Bacillus cereus (strain ATCC 10987 / NRS 248)</name>
    <dbReference type="NCBI Taxonomy" id="222523"/>
    <lineage>
        <taxon>Bacteria</taxon>
        <taxon>Bacillati</taxon>
        <taxon>Bacillota</taxon>
        <taxon>Bacilli</taxon>
        <taxon>Bacillales</taxon>
        <taxon>Bacillaceae</taxon>
        <taxon>Bacillus</taxon>
        <taxon>Bacillus cereus group</taxon>
    </lineage>
</organism>